<name>RUVB_SALTI</name>
<keyword id="KW-0067">ATP-binding</keyword>
<keyword id="KW-0963">Cytoplasm</keyword>
<keyword id="KW-0227">DNA damage</keyword>
<keyword id="KW-0233">DNA recombination</keyword>
<keyword id="KW-0234">DNA repair</keyword>
<keyword id="KW-0238">DNA-binding</keyword>
<keyword id="KW-0378">Hydrolase</keyword>
<keyword id="KW-0547">Nucleotide-binding</keyword>
<feature type="chain" id="PRO_0000165591" description="Holliday junction branch migration complex subunit RuvB">
    <location>
        <begin position="1"/>
        <end position="336"/>
    </location>
</feature>
<feature type="region of interest" description="Large ATPase domain (RuvB-L)" evidence="1">
    <location>
        <begin position="4"/>
        <end position="184"/>
    </location>
</feature>
<feature type="region of interest" description="Small ATPAse domain (RuvB-S)" evidence="1">
    <location>
        <begin position="185"/>
        <end position="255"/>
    </location>
</feature>
<feature type="region of interest" description="Head domain (RuvB-H)" evidence="1">
    <location>
        <begin position="258"/>
        <end position="336"/>
    </location>
</feature>
<feature type="binding site" evidence="1">
    <location>
        <position position="23"/>
    </location>
    <ligand>
        <name>ATP</name>
        <dbReference type="ChEBI" id="CHEBI:30616"/>
    </ligand>
</feature>
<feature type="binding site" evidence="1">
    <location>
        <position position="24"/>
    </location>
    <ligand>
        <name>ATP</name>
        <dbReference type="ChEBI" id="CHEBI:30616"/>
    </ligand>
</feature>
<feature type="binding site" evidence="1">
    <location>
        <position position="65"/>
    </location>
    <ligand>
        <name>ATP</name>
        <dbReference type="ChEBI" id="CHEBI:30616"/>
    </ligand>
</feature>
<feature type="binding site" evidence="1">
    <location>
        <position position="68"/>
    </location>
    <ligand>
        <name>ATP</name>
        <dbReference type="ChEBI" id="CHEBI:30616"/>
    </ligand>
</feature>
<feature type="binding site" evidence="1">
    <location>
        <position position="69"/>
    </location>
    <ligand>
        <name>ATP</name>
        <dbReference type="ChEBI" id="CHEBI:30616"/>
    </ligand>
</feature>
<feature type="binding site" evidence="1">
    <location>
        <position position="69"/>
    </location>
    <ligand>
        <name>Mg(2+)</name>
        <dbReference type="ChEBI" id="CHEBI:18420"/>
    </ligand>
</feature>
<feature type="binding site" evidence="1">
    <location>
        <position position="70"/>
    </location>
    <ligand>
        <name>ATP</name>
        <dbReference type="ChEBI" id="CHEBI:30616"/>
    </ligand>
</feature>
<feature type="binding site" evidence="1">
    <location>
        <begin position="131"/>
        <end position="133"/>
    </location>
    <ligand>
        <name>ATP</name>
        <dbReference type="ChEBI" id="CHEBI:30616"/>
    </ligand>
</feature>
<feature type="binding site" evidence="1">
    <location>
        <position position="174"/>
    </location>
    <ligand>
        <name>ATP</name>
        <dbReference type="ChEBI" id="CHEBI:30616"/>
    </ligand>
</feature>
<feature type="binding site" evidence="1">
    <location>
        <position position="184"/>
    </location>
    <ligand>
        <name>ATP</name>
        <dbReference type="ChEBI" id="CHEBI:30616"/>
    </ligand>
</feature>
<feature type="binding site" evidence="1">
    <location>
        <position position="221"/>
    </location>
    <ligand>
        <name>ATP</name>
        <dbReference type="ChEBI" id="CHEBI:30616"/>
    </ligand>
</feature>
<feature type="binding site" evidence="1">
    <location>
        <position position="294"/>
    </location>
    <ligand>
        <name>DNA</name>
        <dbReference type="ChEBI" id="CHEBI:16991"/>
    </ligand>
</feature>
<feature type="binding site" evidence="1">
    <location>
        <position position="313"/>
    </location>
    <ligand>
        <name>DNA</name>
        <dbReference type="ChEBI" id="CHEBI:16991"/>
    </ligand>
</feature>
<feature type="binding site" evidence="1">
    <location>
        <position position="318"/>
    </location>
    <ligand>
        <name>DNA</name>
        <dbReference type="ChEBI" id="CHEBI:16991"/>
    </ligand>
</feature>
<reference key="1">
    <citation type="journal article" date="2001" name="Nature">
        <title>Complete genome sequence of a multiple drug resistant Salmonella enterica serovar Typhi CT18.</title>
        <authorList>
            <person name="Parkhill J."/>
            <person name="Dougan G."/>
            <person name="James K.D."/>
            <person name="Thomson N.R."/>
            <person name="Pickard D."/>
            <person name="Wain J."/>
            <person name="Churcher C.M."/>
            <person name="Mungall K.L."/>
            <person name="Bentley S.D."/>
            <person name="Holden M.T.G."/>
            <person name="Sebaihia M."/>
            <person name="Baker S."/>
            <person name="Basham D."/>
            <person name="Brooks K."/>
            <person name="Chillingworth T."/>
            <person name="Connerton P."/>
            <person name="Cronin A."/>
            <person name="Davis P."/>
            <person name="Davies R.M."/>
            <person name="Dowd L."/>
            <person name="White N."/>
            <person name="Farrar J."/>
            <person name="Feltwell T."/>
            <person name="Hamlin N."/>
            <person name="Haque A."/>
            <person name="Hien T.T."/>
            <person name="Holroyd S."/>
            <person name="Jagels K."/>
            <person name="Krogh A."/>
            <person name="Larsen T.S."/>
            <person name="Leather S."/>
            <person name="Moule S."/>
            <person name="O'Gaora P."/>
            <person name="Parry C."/>
            <person name="Quail M.A."/>
            <person name="Rutherford K.M."/>
            <person name="Simmonds M."/>
            <person name="Skelton J."/>
            <person name="Stevens K."/>
            <person name="Whitehead S."/>
            <person name="Barrell B.G."/>
        </authorList>
    </citation>
    <scope>NUCLEOTIDE SEQUENCE [LARGE SCALE GENOMIC DNA]</scope>
    <source>
        <strain>CT18</strain>
    </source>
</reference>
<reference key="2">
    <citation type="journal article" date="2003" name="J. Bacteriol.">
        <title>Comparative genomics of Salmonella enterica serovar Typhi strains Ty2 and CT18.</title>
        <authorList>
            <person name="Deng W."/>
            <person name="Liou S.-R."/>
            <person name="Plunkett G. III"/>
            <person name="Mayhew G.F."/>
            <person name="Rose D.J."/>
            <person name="Burland V."/>
            <person name="Kodoyianni V."/>
            <person name="Schwartz D.C."/>
            <person name="Blattner F.R."/>
        </authorList>
    </citation>
    <scope>NUCLEOTIDE SEQUENCE [LARGE SCALE GENOMIC DNA]</scope>
    <source>
        <strain>ATCC 700931 / Ty2</strain>
    </source>
</reference>
<gene>
    <name evidence="1" type="primary">ruvB</name>
    <name type="ordered locus">STY2102</name>
    <name type="ordered locus">t0983</name>
</gene>
<accession>P66756</accession>
<accession>Q8XF35</accession>
<comment type="function">
    <text evidence="1">The RuvA-RuvB-RuvC complex processes Holliday junction (HJ) DNA during genetic recombination and DNA repair, while the RuvA-RuvB complex plays an important role in the rescue of blocked DNA replication forks via replication fork reversal (RFR). RuvA specifically binds to HJ cruciform DNA, conferring on it an open structure. The RuvB hexamer acts as an ATP-dependent pump, pulling dsDNA into and through the RuvAB complex. RuvB forms 2 homohexamers on either side of HJ DNA bound by 1 or 2 RuvA tetramers; 4 subunits per hexamer contact DNA at a time. Coordinated motions by a converter formed by DNA-disengaged RuvB subunits stimulates ATP hydrolysis and nucleotide exchange. Immobilization of the converter enables RuvB to convert the ATP-contained energy into a lever motion, pulling 2 nucleotides of DNA out of the RuvA tetramer per ATP hydrolyzed, thus driving DNA branch migration. The RuvB motors rotate together with the DNA substrate, which together with the progressing nucleotide cycle form the mechanistic basis for DNA recombination by continuous HJ branch migration. Branch migration allows RuvC to scan DNA until it finds its consensus sequence, where it cleaves and resolves cruciform DNA.</text>
</comment>
<comment type="catalytic activity">
    <reaction evidence="1">
        <text>ATP + H2O = ADP + phosphate + H(+)</text>
        <dbReference type="Rhea" id="RHEA:13065"/>
        <dbReference type="ChEBI" id="CHEBI:15377"/>
        <dbReference type="ChEBI" id="CHEBI:15378"/>
        <dbReference type="ChEBI" id="CHEBI:30616"/>
        <dbReference type="ChEBI" id="CHEBI:43474"/>
        <dbReference type="ChEBI" id="CHEBI:456216"/>
    </reaction>
</comment>
<comment type="subunit">
    <text evidence="1">Homohexamer. Forms an RuvA(8)-RuvB(12)-Holliday junction (HJ) complex. HJ DNA is sandwiched between 2 RuvA tetramers; dsDNA enters through RuvA and exits via RuvB. An RuvB hexamer assembles on each DNA strand where it exits the tetramer. Each RuvB hexamer is contacted by two RuvA subunits (via domain III) on 2 adjacent RuvB subunits; this complex drives branch migration. In the full resolvosome a probable DNA-RuvA(4)-RuvB(12)-RuvC(2) complex forms which resolves the HJ.</text>
</comment>
<comment type="subcellular location">
    <subcellularLocation>
        <location evidence="1">Cytoplasm</location>
    </subcellularLocation>
</comment>
<comment type="domain">
    <text evidence="1">Has 3 domains, the large (RuvB-L) and small ATPase (RuvB-S) domains and the C-terminal head (RuvB-H) domain. The head domain binds DNA, while the ATPase domains jointly bind ATP, ADP or are empty depending on the state of the subunit in the translocation cycle. During a single DNA translocation step the structure of each domain remains the same, but their relative positions change.</text>
</comment>
<comment type="similarity">
    <text evidence="1">Belongs to the RuvB family.</text>
</comment>
<sequence>MIEADRLISAGATIAEDVADRAIRPKLLAEYVGQPQVRSQMEIFIQAAKRRGDALDHLLIFGPPGLGKTTLANIVANEMGVNLRTTSGPVLEKAGDLAAMLTNLEPHDVLFIDEIHRLSPVVEEVLYPAMEDYQLDIMIGEGPAARSIKIDLPPFTLIGATTRAGSLTSPLRDRFGIVQRLEFYQVPDLQHIVGRSARHMGLEMSDDGALEVARRARGTPRIANRLLRRVRDFAEVKHDGAISAEIAAQALDMLNVDAEGFDYMDRKLLLAVIDKFFGGPVGLDNLAAAIGEERETIEDVLEPYLIQQGFLQRTPRGRMATVRAWNHFGITPPEMP</sequence>
<evidence type="ECO:0000255" key="1">
    <source>
        <dbReference type="HAMAP-Rule" id="MF_00016"/>
    </source>
</evidence>
<proteinExistence type="inferred from homology"/>
<organism>
    <name type="scientific">Salmonella typhi</name>
    <dbReference type="NCBI Taxonomy" id="90370"/>
    <lineage>
        <taxon>Bacteria</taxon>
        <taxon>Pseudomonadati</taxon>
        <taxon>Pseudomonadota</taxon>
        <taxon>Gammaproteobacteria</taxon>
        <taxon>Enterobacterales</taxon>
        <taxon>Enterobacteriaceae</taxon>
        <taxon>Salmonella</taxon>
    </lineage>
</organism>
<dbReference type="EC" id="3.6.4.-" evidence="1"/>
<dbReference type="EMBL" id="AL513382">
    <property type="protein sequence ID" value="CAD05645.1"/>
    <property type="molecule type" value="Genomic_DNA"/>
</dbReference>
<dbReference type="EMBL" id="AE014613">
    <property type="protein sequence ID" value="AAO68655.1"/>
    <property type="molecule type" value="Genomic_DNA"/>
</dbReference>
<dbReference type="RefSeq" id="NP_456461.1">
    <property type="nucleotide sequence ID" value="NC_003198.1"/>
</dbReference>
<dbReference type="RefSeq" id="WP_000568508.1">
    <property type="nucleotide sequence ID" value="NZ_WSUR01000004.1"/>
</dbReference>
<dbReference type="SMR" id="P66756"/>
<dbReference type="STRING" id="220341.gene:17586010"/>
<dbReference type="KEGG" id="stt:t0983"/>
<dbReference type="KEGG" id="sty:STY2102"/>
<dbReference type="PATRIC" id="fig|220341.7.peg.2112"/>
<dbReference type="eggNOG" id="COG2255">
    <property type="taxonomic scope" value="Bacteria"/>
</dbReference>
<dbReference type="HOGENOM" id="CLU_055599_1_0_6"/>
<dbReference type="OMA" id="IHRMSRP"/>
<dbReference type="OrthoDB" id="9804478at2"/>
<dbReference type="Proteomes" id="UP000000541">
    <property type="component" value="Chromosome"/>
</dbReference>
<dbReference type="Proteomes" id="UP000002670">
    <property type="component" value="Chromosome"/>
</dbReference>
<dbReference type="GO" id="GO:0005737">
    <property type="term" value="C:cytoplasm"/>
    <property type="evidence" value="ECO:0007669"/>
    <property type="project" value="UniProtKB-SubCell"/>
</dbReference>
<dbReference type="GO" id="GO:0048476">
    <property type="term" value="C:Holliday junction resolvase complex"/>
    <property type="evidence" value="ECO:0007669"/>
    <property type="project" value="UniProtKB-UniRule"/>
</dbReference>
<dbReference type="GO" id="GO:0005524">
    <property type="term" value="F:ATP binding"/>
    <property type="evidence" value="ECO:0007669"/>
    <property type="project" value="UniProtKB-UniRule"/>
</dbReference>
<dbReference type="GO" id="GO:0016887">
    <property type="term" value="F:ATP hydrolysis activity"/>
    <property type="evidence" value="ECO:0007669"/>
    <property type="project" value="InterPro"/>
</dbReference>
<dbReference type="GO" id="GO:0000400">
    <property type="term" value="F:four-way junction DNA binding"/>
    <property type="evidence" value="ECO:0007669"/>
    <property type="project" value="UniProtKB-UniRule"/>
</dbReference>
<dbReference type="GO" id="GO:0009378">
    <property type="term" value="F:four-way junction helicase activity"/>
    <property type="evidence" value="ECO:0007669"/>
    <property type="project" value="InterPro"/>
</dbReference>
<dbReference type="GO" id="GO:0006310">
    <property type="term" value="P:DNA recombination"/>
    <property type="evidence" value="ECO:0007669"/>
    <property type="project" value="UniProtKB-UniRule"/>
</dbReference>
<dbReference type="GO" id="GO:0006281">
    <property type="term" value="P:DNA repair"/>
    <property type="evidence" value="ECO:0007669"/>
    <property type="project" value="UniProtKB-UniRule"/>
</dbReference>
<dbReference type="CDD" id="cd00009">
    <property type="entry name" value="AAA"/>
    <property type="match status" value="1"/>
</dbReference>
<dbReference type="FunFam" id="1.10.10.10:FF:000086">
    <property type="entry name" value="Holliday junction ATP-dependent DNA helicase RuvB"/>
    <property type="match status" value="1"/>
</dbReference>
<dbReference type="FunFam" id="1.10.8.60:FF:000023">
    <property type="entry name" value="Holliday junction ATP-dependent DNA helicase RuvB"/>
    <property type="match status" value="1"/>
</dbReference>
<dbReference type="FunFam" id="3.40.50.300:FF:000073">
    <property type="entry name" value="Holliday junction ATP-dependent DNA helicase RuvB"/>
    <property type="match status" value="1"/>
</dbReference>
<dbReference type="Gene3D" id="1.10.8.60">
    <property type="match status" value="1"/>
</dbReference>
<dbReference type="Gene3D" id="3.40.50.300">
    <property type="entry name" value="P-loop containing nucleotide triphosphate hydrolases"/>
    <property type="match status" value="1"/>
</dbReference>
<dbReference type="Gene3D" id="1.10.10.10">
    <property type="entry name" value="Winged helix-like DNA-binding domain superfamily/Winged helix DNA-binding domain"/>
    <property type="match status" value="1"/>
</dbReference>
<dbReference type="HAMAP" id="MF_00016">
    <property type="entry name" value="DNA_HJ_migration_RuvB"/>
    <property type="match status" value="1"/>
</dbReference>
<dbReference type="InterPro" id="IPR003593">
    <property type="entry name" value="AAA+_ATPase"/>
</dbReference>
<dbReference type="InterPro" id="IPR041445">
    <property type="entry name" value="AAA_lid_4"/>
</dbReference>
<dbReference type="InterPro" id="IPR004605">
    <property type="entry name" value="DNA_helicase_Holl-junc_RuvB"/>
</dbReference>
<dbReference type="InterPro" id="IPR027417">
    <property type="entry name" value="P-loop_NTPase"/>
</dbReference>
<dbReference type="InterPro" id="IPR008824">
    <property type="entry name" value="RuvB-like_N"/>
</dbReference>
<dbReference type="InterPro" id="IPR008823">
    <property type="entry name" value="RuvB_C"/>
</dbReference>
<dbReference type="InterPro" id="IPR036388">
    <property type="entry name" value="WH-like_DNA-bd_sf"/>
</dbReference>
<dbReference type="InterPro" id="IPR036390">
    <property type="entry name" value="WH_DNA-bd_sf"/>
</dbReference>
<dbReference type="NCBIfam" id="NF000868">
    <property type="entry name" value="PRK00080.1"/>
    <property type="match status" value="1"/>
</dbReference>
<dbReference type="NCBIfam" id="TIGR00635">
    <property type="entry name" value="ruvB"/>
    <property type="match status" value="1"/>
</dbReference>
<dbReference type="PANTHER" id="PTHR42848">
    <property type="match status" value="1"/>
</dbReference>
<dbReference type="PANTHER" id="PTHR42848:SF1">
    <property type="entry name" value="HOLLIDAY JUNCTION BRANCH MIGRATION COMPLEX SUBUNIT RUVB"/>
    <property type="match status" value="1"/>
</dbReference>
<dbReference type="Pfam" id="PF17864">
    <property type="entry name" value="AAA_lid_4"/>
    <property type="match status" value="1"/>
</dbReference>
<dbReference type="Pfam" id="PF05491">
    <property type="entry name" value="RuvB_C"/>
    <property type="match status" value="1"/>
</dbReference>
<dbReference type="Pfam" id="PF05496">
    <property type="entry name" value="RuvB_N"/>
    <property type="match status" value="1"/>
</dbReference>
<dbReference type="SMART" id="SM00382">
    <property type="entry name" value="AAA"/>
    <property type="match status" value="1"/>
</dbReference>
<dbReference type="SUPFAM" id="SSF52540">
    <property type="entry name" value="P-loop containing nucleoside triphosphate hydrolases"/>
    <property type="match status" value="1"/>
</dbReference>
<dbReference type="SUPFAM" id="SSF46785">
    <property type="entry name" value="Winged helix' DNA-binding domain"/>
    <property type="match status" value="1"/>
</dbReference>
<protein>
    <recommendedName>
        <fullName evidence="1">Holliday junction branch migration complex subunit RuvB</fullName>
        <ecNumber evidence="1">3.6.4.-</ecNumber>
    </recommendedName>
</protein>